<reference key="1">
    <citation type="journal article" date="2003" name="Nature">
        <title>Unique physiological and pathogenic features of Leptospira interrogans revealed by whole-genome sequencing.</title>
        <authorList>
            <person name="Ren S.-X."/>
            <person name="Fu G."/>
            <person name="Jiang X.-G."/>
            <person name="Zeng R."/>
            <person name="Miao Y.-G."/>
            <person name="Xu H."/>
            <person name="Zhang Y.-X."/>
            <person name="Xiong H."/>
            <person name="Lu G."/>
            <person name="Lu L.-F."/>
            <person name="Jiang H.-Q."/>
            <person name="Jia J."/>
            <person name="Tu Y.-F."/>
            <person name="Jiang J.-X."/>
            <person name="Gu W.-Y."/>
            <person name="Zhang Y.-Q."/>
            <person name="Cai Z."/>
            <person name="Sheng H.-H."/>
            <person name="Yin H.-F."/>
            <person name="Zhang Y."/>
            <person name="Zhu G.-F."/>
            <person name="Wan M."/>
            <person name="Huang H.-L."/>
            <person name="Qian Z."/>
            <person name="Wang S.-Y."/>
            <person name="Ma W."/>
            <person name="Yao Z.-J."/>
            <person name="Shen Y."/>
            <person name="Qiang B.-Q."/>
            <person name="Xia Q.-C."/>
            <person name="Guo X.-K."/>
            <person name="Danchin A."/>
            <person name="Saint Girons I."/>
            <person name="Somerville R.L."/>
            <person name="Wen Y.-M."/>
            <person name="Shi M.-H."/>
            <person name="Chen Z."/>
            <person name="Xu J.-G."/>
            <person name="Zhao G.-P."/>
        </authorList>
    </citation>
    <scope>NUCLEOTIDE SEQUENCE [LARGE SCALE GENOMIC DNA]</scope>
    <source>
        <strain>56601</strain>
    </source>
</reference>
<name>RL35_LEPIN</name>
<comment type="similarity">
    <text evidence="1">Belongs to the bacterial ribosomal protein bL35 family.</text>
</comment>
<feature type="chain" id="PRO_0000177374" description="Large ribosomal subunit protein bL35">
    <location>
        <begin position="1"/>
        <end position="67"/>
    </location>
</feature>
<proteinExistence type="inferred from homology"/>
<organism>
    <name type="scientific">Leptospira interrogans serogroup Icterohaemorrhagiae serovar Lai (strain 56601)</name>
    <dbReference type="NCBI Taxonomy" id="189518"/>
    <lineage>
        <taxon>Bacteria</taxon>
        <taxon>Pseudomonadati</taxon>
        <taxon>Spirochaetota</taxon>
        <taxon>Spirochaetia</taxon>
        <taxon>Leptospirales</taxon>
        <taxon>Leptospiraceae</taxon>
        <taxon>Leptospira</taxon>
    </lineage>
</organism>
<keyword id="KW-1185">Reference proteome</keyword>
<keyword id="KW-0687">Ribonucleoprotein</keyword>
<keyword id="KW-0689">Ribosomal protein</keyword>
<evidence type="ECO:0000255" key="1">
    <source>
        <dbReference type="HAMAP-Rule" id="MF_00514"/>
    </source>
</evidence>
<evidence type="ECO:0000305" key="2"/>
<protein>
    <recommendedName>
        <fullName evidence="1">Large ribosomal subunit protein bL35</fullName>
    </recommendedName>
    <alternativeName>
        <fullName evidence="2">50S ribosomal protein L35</fullName>
    </alternativeName>
</protein>
<accession>Q8F6Q8</accession>
<gene>
    <name evidence="1" type="primary">rpmI</name>
    <name type="ordered locus">LA_1243</name>
</gene>
<sequence length="67" mass="8030">MPKLKTNRAAAKRFKFTKNNKIKRKSMNTRHILTKKGPKRRRRLRGLTLVHNSDWKSIVRLMPYGVR</sequence>
<dbReference type="EMBL" id="AE010300">
    <property type="protein sequence ID" value="AAN48442.1"/>
    <property type="molecule type" value="Genomic_DNA"/>
</dbReference>
<dbReference type="RefSeq" id="NP_711424.1">
    <property type="nucleotide sequence ID" value="NC_004342.2"/>
</dbReference>
<dbReference type="RefSeq" id="WP_001125262.1">
    <property type="nucleotide sequence ID" value="NC_004342.2"/>
</dbReference>
<dbReference type="SMR" id="Q8F6Q8"/>
<dbReference type="FunCoup" id="Q8F6Q8">
    <property type="interactions" value="325"/>
</dbReference>
<dbReference type="STRING" id="189518.LA_1243"/>
<dbReference type="PaxDb" id="189518-LA_1243"/>
<dbReference type="EnsemblBacteria" id="AAN48442">
    <property type="protein sequence ID" value="AAN48442"/>
    <property type="gene ID" value="LA_1243"/>
</dbReference>
<dbReference type="GeneID" id="61142339"/>
<dbReference type="KEGG" id="lil:LA_1243"/>
<dbReference type="PATRIC" id="fig|189518.3.peg.1244"/>
<dbReference type="HOGENOM" id="CLU_169643_1_1_12"/>
<dbReference type="InParanoid" id="Q8F6Q8"/>
<dbReference type="OrthoDB" id="47476at2"/>
<dbReference type="PRO" id="PR:Q8F6Q8"/>
<dbReference type="Proteomes" id="UP000001408">
    <property type="component" value="Chromosome I"/>
</dbReference>
<dbReference type="GO" id="GO:0022625">
    <property type="term" value="C:cytosolic large ribosomal subunit"/>
    <property type="evidence" value="ECO:0000318"/>
    <property type="project" value="GO_Central"/>
</dbReference>
<dbReference type="GO" id="GO:0003735">
    <property type="term" value="F:structural constituent of ribosome"/>
    <property type="evidence" value="ECO:0000318"/>
    <property type="project" value="GO_Central"/>
</dbReference>
<dbReference type="GO" id="GO:0006412">
    <property type="term" value="P:translation"/>
    <property type="evidence" value="ECO:0007669"/>
    <property type="project" value="UniProtKB-UniRule"/>
</dbReference>
<dbReference type="FunFam" id="4.10.410.60:FF:000001">
    <property type="entry name" value="50S ribosomal protein L35"/>
    <property type="match status" value="1"/>
</dbReference>
<dbReference type="Gene3D" id="4.10.410.60">
    <property type="match status" value="1"/>
</dbReference>
<dbReference type="HAMAP" id="MF_00514">
    <property type="entry name" value="Ribosomal_bL35"/>
    <property type="match status" value="1"/>
</dbReference>
<dbReference type="InterPro" id="IPR001706">
    <property type="entry name" value="Ribosomal_bL35"/>
</dbReference>
<dbReference type="InterPro" id="IPR021137">
    <property type="entry name" value="Ribosomal_bL35-like"/>
</dbReference>
<dbReference type="InterPro" id="IPR018265">
    <property type="entry name" value="Ribosomal_bL35_CS"/>
</dbReference>
<dbReference type="InterPro" id="IPR037229">
    <property type="entry name" value="Ribosomal_bL35_sf"/>
</dbReference>
<dbReference type="NCBIfam" id="TIGR00001">
    <property type="entry name" value="rpmI_bact"/>
    <property type="match status" value="1"/>
</dbReference>
<dbReference type="PANTHER" id="PTHR33343">
    <property type="entry name" value="54S RIBOSOMAL PROTEIN BL35M"/>
    <property type="match status" value="1"/>
</dbReference>
<dbReference type="PANTHER" id="PTHR33343:SF1">
    <property type="entry name" value="LARGE RIBOSOMAL SUBUNIT PROTEIN BL35M"/>
    <property type="match status" value="1"/>
</dbReference>
<dbReference type="Pfam" id="PF01632">
    <property type="entry name" value="Ribosomal_L35p"/>
    <property type="match status" value="1"/>
</dbReference>
<dbReference type="PRINTS" id="PR00064">
    <property type="entry name" value="RIBOSOMALL35"/>
</dbReference>
<dbReference type="SUPFAM" id="SSF143034">
    <property type="entry name" value="L35p-like"/>
    <property type="match status" value="1"/>
</dbReference>
<dbReference type="PROSITE" id="PS00936">
    <property type="entry name" value="RIBOSOMAL_L35"/>
    <property type="match status" value="1"/>
</dbReference>